<name>SPX3_BOVIN</name>
<organism>
    <name type="scientific">Bos taurus</name>
    <name type="common">Bovine</name>
    <dbReference type="NCBI Taxonomy" id="9913"/>
    <lineage>
        <taxon>Eukaryota</taxon>
        <taxon>Metazoa</taxon>
        <taxon>Chordata</taxon>
        <taxon>Craniata</taxon>
        <taxon>Vertebrata</taxon>
        <taxon>Euteleostomi</taxon>
        <taxon>Mammalia</taxon>
        <taxon>Eutheria</taxon>
        <taxon>Laurasiatheria</taxon>
        <taxon>Artiodactyla</taxon>
        <taxon>Ruminantia</taxon>
        <taxon>Pecora</taxon>
        <taxon>Bovidae</taxon>
        <taxon>Bovinae</taxon>
        <taxon>Bos</taxon>
    </lineage>
</organism>
<comment type="function">
    <text evidence="1">Unlike the other SLC37 members, lacks glucose-6-phosphate antiporter activity. In osteoclasts, forms a transporter complex with ATRAID for nitrogen-containing-bisphophonates (N-BPs) required for releasing N-BP molecules that have trafficked to lysosomes through fluid-phase endocytosis into the cytosol.</text>
</comment>
<comment type="subunit">
    <text evidence="1">Interacts with ATRAID; the interaction is direct and both proteins are mutually dependent for their stability.</text>
</comment>
<comment type="subcellular location">
    <subcellularLocation>
        <location evidence="1">Endoplasmic reticulum membrane</location>
        <topology evidence="2">Multi-pass membrane protein</topology>
    </subcellularLocation>
    <subcellularLocation>
        <location evidence="1">Lysosome membrane</location>
        <topology evidence="2">Multi-pass membrane protein</topology>
    </subcellularLocation>
</comment>
<comment type="PTM">
    <text evidence="1">Glycosylated.</text>
</comment>
<comment type="similarity">
    <text evidence="3">Belongs to the major facilitator superfamily. Organophosphate:Pi antiporter (OPA) (TC 2.A.1.4) family.</text>
</comment>
<accession>Q17QZ3</accession>
<evidence type="ECO:0000250" key="1">
    <source>
        <dbReference type="UniProtKB" id="Q8NCC5"/>
    </source>
</evidence>
<evidence type="ECO:0000255" key="2"/>
<evidence type="ECO:0000305" key="3"/>
<keyword id="KW-0256">Endoplasmic reticulum</keyword>
<keyword id="KW-0325">Glycoprotein</keyword>
<keyword id="KW-0458">Lysosome</keyword>
<keyword id="KW-0472">Membrane</keyword>
<keyword id="KW-1185">Reference proteome</keyword>
<keyword id="KW-0762">Sugar transport</keyword>
<keyword id="KW-0812">Transmembrane</keyword>
<keyword id="KW-1133">Transmembrane helix</keyword>
<keyword id="KW-0813">Transport</keyword>
<reference key="1">
    <citation type="submission" date="2006-06" db="EMBL/GenBank/DDBJ databases">
        <authorList>
            <consortium name="NIH - Mammalian Gene Collection (MGC) project"/>
        </authorList>
    </citation>
    <scope>NUCLEOTIDE SEQUENCE [LARGE SCALE MRNA]</scope>
    <source>
        <strain>Hereford</strain>
        <tissue>Uterus</tissue>
    </source>
</reference>
<dbReference type="EMBL" id="BC118104">
    <property type="protein sequence ID" value="AAI18105.1"/>
    <property type="molecule type" value="mRNA"/>
</dbReference>
<dbReference type="RefSeq" id="NP_001068752.1">
    <property type="nucleotide sequence ID" value="NM_001075284.1"/>
</dbReference>
<dbReference type="RefSeq" id="XP_024846322.1">
    <property type="nucleotide sequence ID" value="XM_024990554.1"/>
</dbReference>
<dbReference type="SMR" id="Q17QZ3"/>
<dbReference type="FunCoup" id="Q17QZ3">
    <property type="interactions" value="607"/>
</dbReference>
<dbReference type="STRING" id="9913.ENSBTAP00000033404"/>
<dbReference type="GlyCosmos" id="Q17QZ3">
    <property type="glycosylation" value="2 sites, No reported glycans"/>
</dbReference>
<dbReference type="GlyGen" id="Q17QZ3">
    <property type="glycosylation" value="2 sites"/>
</dbReference>
<dbReference type="PaxDb" id="9913-ENSBTAP00000033404"/>
<dbReference type="Ensembl" id="ENSBTAT00000033491.3">
    <property type="protein sequence ID" value="ENSBTAP00000033404.2"/>
    <property type="gene ID" value="ENSBTAG00000012239.5"/>
</dbReference>
<dbReference type="GeneID" id="506910"/>
<dbReference type="KEGG" id="bta:506910"/>
<dbReference type="CTD" id="84255"/>
<dbReference type="VEuPathDB" id="HostDB:ENSBTAG00000012239"/>
<dbReference type="VGNC" id="VGNC:34844">
    <property type="gene designation" value="SLC37A3"/>
</dbReference>
<dbReference type="eggNOG" id="KOG2533">
    <property type="taxonomic scope" value="Eukaryota"/>
</dbReference>
<dbReference type="GeneTree" id="ENSGT00940000163296"/>
<dbReference type="HOGENOM" id="CLU_001265_31_6_1"/>
<dbReference type="InParanoid" id="Q17QZ3"/>
<dbReference type="OMA" id="YQWQVFL"/>
<dbReference type="OrthoDB" id="3639251at2759"/>
<dbReference type="TreeFam" id="TF314991"/>
<dbReference type="Proteomes" id="UP000009136">
    <property type="component" value="Chromosome 4"/>
</dbReference>
<dbReference type="Bgee" id="ENSBTAG00000012239">
    <property type="expression patterns" value="Expressed in saliva-secreting gland and 105 other cell types or tissues"/>
</dbReference>
<dbReference type="GO" id="GO:0005789">
    <property type="term" value="C:endoplasmic reticulum membrane"/>
    <property type="evidence" value="ECO:0000250"/>
    <property type="project" value="UniProtKB"/>
</dbReference>
<dbReference type="GO" id="GO:0005765">
    <property type="term" value="C:lysosomal membrane"/>
    <property type="evidence" value="ECO:0000250"/>
    <property type="project" value="UniProtKB"/>
</dbReference>
<dbReference type="GO" id="GO:0042910">
    <property type="term" value="F:xenobiotic transmembrane transporter activity"/>
    <property type="evidence" value="ECO:0000250"/>
    <property type="project" value="UniProtKB"/>
</dbReference>
<dbReference type="GO" id="GO:0006855">
    <property type="term" value="P:xenobiotic transmembrane transport"/>
    <property type="evidence" value="ECO:0000250"/>
    <property type="project" value="UniProtKB"/>
</dbReference>
<dbReference type="CDD" id="cd17342">
    <property type="entry name" value="MFS_SLC37A3"/>
    <property type="match status" value="1"/>
</dbReference>
<dbReference type="FunFam" id="1.20.1250.20:FF:000028">
    <property type="entry name" value="Sugar phosphate exchanger 3 isoform 1"/>
    <property type="match status" value="1"/>
</dbReference>
<dbReference type="FunFam" id="1.20.1250.20:FF:000132">
    <property type="entry name" value="sugar phosphate exchanger 3 isoform X1"/>
    <property type="match status" value="1"/>
</dbReference>
<dbReference type="Gene3D" id="1.20.1250.20">
    <property type="entry name" value="MFS general substrate transporter like domains"/>
    <property type="match status" value="2"/>
</dbReference>
<dbReference type="InterPro" id="IPR011701">
    <property type="entry name" value="MFS"/>
</dbReference>
<dbReference type="InterPro" id="IPR020846">
    <property type="entry name" value="MFS_dom"/>
</dbReference>
<dbReference type="InterPro" id="IPR036259">
    <property type="entry name" value="MFS_trans_sf"/>
</dbReference>
<dbReference type="InterPro" id="IPR000849">
    <property type="entry name" value="Sugar_P_transporter"/>
</dbReference>
<dbReference type="PANTHER" id="PTHR43184">
    <property type="entry name" value="MAJOR FACILITATOR SUPERFAMILY TRANSPORTER 16, ISOFORM B"/>
    <property type="match status" value="1"/>
</dbReference>
<dbReference type="PANTHER" id="PTHR43184:SF12">
    <property type="entry name" value="SUGAR PHOSPHATE EXCHANGER 3"/>
    <property type="match status" value="1"/>
</dbReference>
<dbReference type="Pfam" id="PF07690">
    <property type="entry name" value="MFS_1"/>
    <property type="match status" value="1"/>
</dbReference>
<dbReference type="PIRSF" id="PIRSF002808">
    <property type="entry name" value="Hexose_phosphate_transp"/>
    <property type="match status" value="1"/>
</dbReference>
<dbReference type="SUPFAM" id="SSF103473">
    <property type="entry name" value="MFS general substrate transporter"/>
    <property type="match status" value="1"/>
</dbReference>
<dbReference type="PROSITE" id="PS50850">
    <property type="entry name" value="MFS"/>
    <property type="match status" value="1"/>
</dbReference>
<protein>
    <recommendedName>
        <fullName>Sugar phosphate exchanger 3</fullName>
    </recommendedName>
    <alternativeName>
        <fullName>Solute carrier family 37 member 3</fullName>
    </alternativeName>
</protein>
<gene>
    <name type="primary">SLC37A3</name>
    <name type="synonym">SPX3</name>
</gene>
<feature type="chain" id="PRO_0000309277" description="Sugar phosphate exchanger 3">
    <location>
        <begin position="1"/>
        <end position="495"/>
    </location>
</feature>
<feature type="transmembrane region" description="Helical" evidence="2">
    <location>
        <begin position="16"/>
        <end position="36"/>
    </location>
</feature>
<feature type="transmembrane region" description="Helical" evidence="2">
    <location>
        <begin position="82"/>
        <end position="102"/>
    </location>
</feature>
<feature type="transmembrane region" description="Helical" evidence="2">
    <location>
        <begin position="114"/>
        <end position="134"/>
    </location>
</feature>
<feature type="transmembrane region" description="Helical" evidence="2">
    <location>
        <begin position="148"/>
        <end position="168"/>
    </location>
</feature>
<feature type="transmembrane region" description="Helical" evidence="2">
    <location>
        <begin position="178"/>
        <end position="198"/>
    </location>
</feature>
<feature type="transmembrane region" description="Helical" evidence="2">
    <location>
        <begin position="210"/>
        <end position="230"/>
    </location>
</feature>
<feature type="transmembrane region" description="Helical" evidence="2">
    <location>
        <begin position="298"/>
        <end position="318"/>
    </location>
</feature>
<feature type="transmembrane region" description="Helical" evidence="2">
    <location>
        <begin position="334"/>
        <end position="354"/>
    </location>
</feature>
<feature type="transmembrane region" description="Helical" evidence="2">
    <location>
        <begin position="358"/>
        <end position="378"/>
    </location>
</feature>
<feature type="transmembrane region" description="Helical" evidence="2">
    <location>
        <begin position="387"/>
        <end position="407"/>
    </location>
</feature>
<feature type="transmembrane region" description="Helical" evidence="2">
    <location>
        <begin position="429"/>
        <end position="449"/>
    </location>
</feature>
<feature type="transmembrane region" description="Helical" evidence="2">
    <location>
        <begin position="453"/>
        <end position="473"/>
    </location>
</feature>
<feature type="glycosylation site" description="N-linked (GlcNAc...) asparagine" evidence="2">
    <location>
        <position position="58"/>
    </location>
</feature>
<feature type="glycosylation site" description="N-linked (GlcNAc...) asparagine" evidence="2">
    <location>
        <position position="267"/>
    </location>
</feature>
<sequence>MAWPRIFQRGALLSRFSHHHMVVFLLTFFSYSLLHASRKTFSNVKVSISKQWTPSAFNKSTELLPVEIWSSNHLFPSAEEATLFLGMLDTIFLFSYAVGLFISGIVGDRLNLRWVLSFGMCSSALVVFVFGTLTEWLHFYNKGLYCSLWIVNGLLQSTGWPCVVAVMGNWFGKAGRGVVFGLWSACASVGNILGACLASSVLQYGYEYAFLVTAAVQFAGGIIIFFGLLVSPEEIGIPGIETEDNFEEDSHRPLINGAENEDEAEPNYSIQEGNTVTQVKAISFYQACCLPGVIAYSLAYACLKLVNYSFFFWLPFYLSNNFGWKEAEADQLSIWYDVGGIIGGTLQGFISDMLQKRAPVLALSLLLAIGSLVGYSRSPNDKSINALLMAVTGFFIGGPSNMISSAISADLGRQELIQGSSEALATVTGIVDGTGSIGAAVGQYLVSLIQDNLGWMWVFYFFILMTSCTVLFISPLIVRETCSLMQRRQTRVLNE</sequence>
<proteinExistence type="evidence at transcript level"/>